<proteinExistence type="inferred from homology"/>
<dbReference type="EC" id="2.5.1.19" evidence="1"/>
<dbReference type="EMBL" id="CP000919">
    <property type="protein sequence ID" value="ACO18606.1"/>
    <property type="molecule type" value="Genomic_DNA"/>
</dbReference>
<dbReference type="RefSeq" id="WP_000769886.1">
    <property type="nucleotide sequence ID" value="NC_012466.1"/>
</dbReference>
<dbReference type="SMR" id="C1CEW0"/>
<dbReference type="KEGG" id="sjj:SPJ_1271"/>
<dbReference type="HOGENOM" id="CLU_024321_0_1_9"/>
<dbReference type="UniPathway" id="UPA00053">
    <property type="reaction ID" value="UER00089"/>
</dbReference>
<dbReference type="Proteomes" id="UP000002206">
    <property type="component" value="Chromosome"/>
</dbReference>
<dbReference type="GO" id="GO:0005737">
    <property type="term" value="C:cytoplasm"/>
    <property type="evidence" value="ECO:0007669"/>
    <property type="project" value="UniProtKB-SubCell"/>
</dbReference>
<dbReference type="GO" id="GO:0003866">
    <property type="term" value="F:3-phosphoshikimate 1-carboxyvinyltransferase activity"/>
    <property type="evidence" value="ECO:0007669"/>
    <property type="project" value="UniProtKB-UniRule"/>
</dbReference>
<dbReference type="GO" id="GO:0008652">
    <property type="term" value="P:amino acid biosynthetic process"/>
    <property type="evidence" value="ECO:0007669"/>
    <property type="project" value="UniProtKB-KW"/>
</dbReference>
<dbReference type="GO" id="GO:0009073">
    <property type="term" value="P:aromatic amino acid family biosynthetic process"/>
    <property type="evidence" value="ECO:0007669"/>
    <property type="project" value="UniProtKB-KW"/>
</dbReference>
<dbReference type="GO" id="GO:0009423">
    <property type="term" value="P:chorismate biosynthetic process"/>
    <property type="evidence" value="ECO:0007669"/>
    <property type="project" value="UniProtKB-UniRule"/>
</dbReference>
<dbReference type="CDD" id="cd01554">
    <property type="entry name" value="EPT-like"/>
    <property type="match status" value="1"/>
</dbReference>
<dbReference type="FunFam" id="3.65.10.10:FF:000005">
    <property type="entry name" value="3-phosphoshikimate 1-carboxyvinyltransferase"/>
    <property type="match status" value="1"/>
</dbReference>
<dbReference type="FunFam" id="3.65.10.10:FF:000006">
    <property type="entry name" value="3-phosphoshikimate 1-carboxyvinyltransferase"/>
    <property type="match status" value="1"/>
</dbReference>
<dbReference type="Gene3D" id="3.65.10.10">
    <property type="entry name" value="Enolpyruvate transferase domain"/>
    <property type="match status" value="2"/>
</dbReference>
<dbReference type="HAMAP" id="MF_00210">
    <property type="entry name" value="EPSP_synth"/>
    <property type="match status" value="1"/>
</dbReference>
<dbReference type="InterPro" id="IPR001986">
    <property type="entry name" value="Enolpyruvate_Tfrase_dom"/>
</dbReference>
<dbReference type="InterPro" id="IPR036968">
    <property type="entry name" value="Enolpyruvate_Tfrase_sf"/>
</dbReference>
<dbReference type="InterPro" id="IPR006264">
    <property type="entry name" value="EPSP_synthase"/>
</dbReference>
<dbReference type="InterPro" id="IPR023193">
    <property type="entry name" value="EPSP_synthase_CS"/>
</dbReference>
<dbReference type="InterPro" id="IPR013792">
    <property type="entry name" value="RNA3'P_cycl/enolpyr_Trfase_a/b"/>
</dbReference>
<dbReference type="NCBIfam" id="TIGR01356">
    <property type="entry name" value="aroA"/>
    <property type="match status" value="1"/>
</dbReference>
<dbReference type="PANTHER" id="PTHR21090">
    <property type="entry name" value="AROM/DEHYDROQUINATE SYNTHASE"/>
    <property type="match status" value="1"/>
</dbReference>
<dbReference type="PANTHER" id="PTHR21090:SF5">
    <property type="entry name" value="PENTAFUNCTIONAL AROM POLYPEPTIDE"/>
    <property type="match status" value="1"/>
</dbReference>
<dbReference type="Pfam" id="PF00275">
    <property type="entry name" value="EPSP_synthase"/>
    <property type="match status" value="1"/>
</dbReference>
<dbReference type="PIRSF" id="PIRSF000505">
    <property type="entry name" value="EPSPS"/>
    <property type="match status" value="1"/>
</dbReference>
<dbReference type="SUPFAM" id="SSF55205">
    <property type="entry name" value="EPT/RTPC-like"/>
    <property type="match status" value="1"/>
</dbReference>
<dbReference type="PROSITE" id="PS00104">
    <property type="entry name" value="EPSP_SYNTHASE_1"/>
    <property type="match status" value="1"/>
</dbReference>
<dbReference type="PROSITE" id="PS00885">
    <property type="entry name" value="EPSP_SYNTHASE_2"/>
    <property type="match status" value="1"/>
</dbReference>
<protein>
    <recommendedName>
        <fullName evidence="1">3-phosphoshikimate 1-carboxyvinyltransferase</fullName>
        <ecNumber evidence="1">2.5.1.19</ecNumber>
    </recommendedName>
    <alternativeName>
        <fullName evidence="1">5-enolpyruvylshikimate-3-phosphate synthase</fullName>
        <shortName evidence="1">EPSP synthase</shortName>
        <shortName evidence="1">EPSPS</shortName>
    </alternativeName>
</protein>
<keyword id="KW-0028">Amino-acid biosynthesis</keyword>
<keyword id="KW-0057">Aromatic amino acid biosynthesis</keyword>
<keyword id="KW-0963">Cytoplasm</keyword>
<keyword id="KW-0808">Transferase</keyword>
<name>AROA_STRZJ</name>
<comment type="function">
    <text evidence="1">Catalyzes the transfer of the enolpyruvyl moiety of phosphoenolpyruvate (PEP) to the 5-hydroxyl of shikimate-3-phosphate (S3P) to produce enolpyruvyl shikimate-3-phosphate and inorganic phosphate.</text>
</comment>
<comment type="catalytic activity">
    <reaction evidence="1">
        <text>3-phosphoshikimate + phosphoenolpyruvate = 5-O-(1-carboxyvinyl)-3-phosphoshikimate + phosphate</text>
        <dbReference type="Rhea" id="RHEA:21256"/>
        <dbReference type="ChEBI" id="CHEBI:43474"/>
        <dbReference type="ChEBI" id="CHEBI:57701"/>
        <dbReference type="ChEBI" id="CHEBI:58702"/>
        <dbReference type="ChEBI" id="CHEBI:145989"/>
        <dbReference type="EC" id="2.5.1.19"/>
    </reaction>
    <physiologicalReaction direction="left-to-right" evidence="1">
        <dbReference type="Rhea" id="RHEA:21257"/>
    </physiologicalReaction>
</comment>
<comment type="pathway">
    <text evidence="1">Metabolic intermediate biosynthesis; chorismate biosynthesis; chorismate from D-erythrose 4-phosphate and phosphoenolpyruvate: step 6/7.</text>
</comment>
<comment type="subunit">
    <text evidence="1">Monomer.</text>
</comment>
<comment type="subcellular location">
    <subcellularLocation>
        <location evidence="1">Cytoplasm</location>
    </subcellularLocation>
</comment>
<comment type="similarity">
    <text evidence="1">Belongs to the EPSP synthase family.</text>
</comment>
<accession>C1CEW0</accession>
<feature type="chain" id="PRO_1000124711" description="3-phosphoshikimate 1-carboxyvinyltransferase">
    <location>
        <begin position="1"/>
        <end position="427"/>
    </location>
</feature>
<feature type="active site" description="Proton acceptor" evidence="1">
    <location>
        <position position="312"/>
    </location>
</feature>
<feature type="binding site" evidence="1">
    <location>
        <position position="20"/>
    </location>
    <ligand>
        <name>3-phosphoshikimate</name>
        <dbReference type="ChEBI" id="CHEBI:145989"/>
    </ligand>
</feature>
<feature type="binding site" evidence="1">
    <location>
        <position position="20"/>
    </location>
    <ligand>
        <name>phosphoenolpyruvate</name>
        <dbReference type="ChEBI" id="CHEBI:58702"/>
    </ligand>
</feature>
<feature type="binding site" evidence="1">
    <location>
        <position position="21"/>
    </location>
    <ligand>
        <name>3-phosphoshikimate</name>
        <dbReference type="ChEBI" id="CHEBI:145989"/>
    </ligand>
</feature>
<feature type="binding site" evidence="1">
    <location>
        <position position="25"/>
    </location>
    <ligand>
        <name>3-phosphoshikimate</name>
        <dbReference type="ChEBI" id="CHEBI:145989"/>
    </ligand>
</feature>
<feature type="binding site" evidence="1">
    <location>
        <position position="92"/>
    </location>
    <ligand>
        <name>phosphoenolpyruvate</name>
        <dbReference type="ChEBI" id="CHEBI:58702"/>
    </ligand>
</feature>
<feature type="binding site" evidence="1">
    <location>
        <position position="120"/>
    </location>
    <ligand>
        <name>phosphoenolpyruvate</name>
        <dbReference type="ChEBI" id="CHEBI:58702"/>
    </ligand>
</feature>
<feature type="binding site" evidence="1">
    <location>
        <position position="166"/>
    </location>
    <ligand>
        <name>3-phosphoshikimate</name>
        <dbReference type="ChEBI" id="CHEBI:145989"/>
    </ligand>
</feature>
<feature type="binding site" evidence="1">
    <location>
        <position position="168"/>
    </location>
    <ligand>
        <name>3-phosphoshikimate</name>
        <dbReference type="ChEBI" id="CHEBI:145989"/>
    </ligand>
</feature>
<feature type="binding site" evidence="1">
    <location>
        <position position="168"/>
    </location>
    <ligand>
        <name>phosphoenolpyruvate</name>
        <dbReference type="ChEBI" id="CHEBI:58702"/>
    </ligand>
</feature>
<feature type="binding site" evidence="1">
    <location>
        <position position="312"/>
    </location>
    <ligand>
        <name>3-phosphoshikimate</name>
        <dbReference type="ChEBI" id="CHEBI:145989"/>
    </ligand>
</feature>
<feature type="binding site" evidence="1">
    <location>
        <position position="339"/>
    </location>
    <ligand>
        <name>3-phosphoshikimate</name>
        <dbReference type="ChEBI" id="CHEBI:145989"/>
    </ligand>
</feature>
<feature type="binding site" evidence="1">
    <location>
        <position position="343"/>
    </location>
    <ligand>
        <name>phosphoenolpyruvate</name>
        <dbReference type="ChEBI" id="CHEBI:58702"/>
    </ligand>
</feature>
<feature type="binding site" evidence="1">
    <location>
        <position position="385"/>
    </location>
    <ligand>
        <name>phosphoenolpyruvate</name>
        <dbReference type="ChEBI" id="CHEBI:58702"/>
    </ligand>
</feature>
<gene>
    <name evidence="1" type="primary">aroA</name>
    <name type="ordered locus">SPJ_1271</name>
</gene>
<sequence length="427" mass="45738">MKLKTNIRHLHGSIRVPGDKSISHRSIIFGSLAEGETKVYDILRGEDVLSTMQVFRDLGVEIEDKDGVITIQGVGMAGLKAPQNALNMGNSGTSIRLISGVLAGADFEVEMFGDDSLSKRPMDRVTLPLKKMGVSISGQTERDLPPLRLKGTKNLRPIHYELPIASAQVKSALMFAALQAKGESVIIEKECTRNHTEDMLKQFGGHLSVDGKKITVQGPQKLTGQKVVVPGDISSAAFWLVAGLIVPNSRLVLQNVGINETRTGIIDVIRAMGGKLEITEIDPVAKSSTLTVESSDLKGTEIGGALIPRLIDELPIIALLATQAQGVTVIKDAEELKVKETDRIQVVADALNSMGADITPTADGMIIKGKSALHGARVNTFGDHRIGMMTAIAALLVADGEVELDRAEAINTSYPSFFDDLESLIHG</sequence>
<organism>
    <name type="scientific">Streptococcus pneumoniae (strain JJA)</name>
    <dbReference type="NCBI Taxonomy" id="488222"/>
    <lineage>
        <taxon>Bacteria</taxon>
        <taxon>Bacillati</taxon>
        <taxon>Bacillota</taxon>
        <taxon>Bacilli</taxon>
        <taxon>Lactobacillales</taxon>
        <taxon>Streptococcaceae</taxon>
        <taxon>Streptococcus</taxon>
    </lineage>
</organism>
<evidence type="ECO:0000255" key="1">
    <source>
        <dbReference type="HAMAP-Rule" id="MF_00210"/>
    </source>
</evidence>
<reference key="1">
    <citation type="journal article" date="2010" name="Genome Biol.">
        <title>Structure and dynamics of the pan-genome of Streptococcus pneumoniae and closely related species.</title>
        <authorList>
            <person name="Donati C."/>
            <person name="Hiller N.L."/>
            <person name="Tettelin H."/>
            <person name="Muzzi A."/>
            <person name="Croucher N.J."/>
            <person name="Angiuoli S.V."/>
            <person name="Oggioni M."/>
            <person name="Dunning Hotopp J.C."/>
            <person name="Hu F.Z."/>
            <person name="Riley D.R."/>
            <person name="Covacci A."/>
            <person name="Mitchell T.J."/>
            <person name="Bentley S.D."/>
            <person name="Kilian M."/>
            <person name="Ehrlich G.D."/>
            <person name="Rappuoli R."/>
            <person name="Moxon E.R."/>
            <person name="Masignani V."/>
        </authorList>
    </citation>
    <scope>NUCLEOTIDE SEQUENCE [LARGE SCALE GENOMIC DNA]</scope>
    <source>
        <strain>JJA</strain>
    </source>
</reference>